<accession>B8IYL5</accession>
<reference key="1">
    <citation type="submission" date="2009-01" db="EMBL/GenBank/DDBJ databases">
        <title>Complete sequence of Desulfovibrio desulfuricans subsp. desulfuricans str. ATCC 27774.</title>
        <authorList>
            <consortium name="US DOE Joint Genome Institute"/>
            <person name="Lucas S."/>
            <person name="Copeland A."/>
            <person name="Lapidus A."/>
            <person name="Glavina del Rio T."/>
            <person name="Tice H."/>
            <person name="Bruce D."/>
            <person name="Goodwin L."/>
            <person name="Pitluck S."/>
            <person name="Sims D."/>
            <person name="Lu M."/>
            <person name="Kiss H."/>
            <person name="Meineke L."/>
            <person name="Brettin T."/>
            <person name="Detter J.C."/>
            <person name="Han C."/>
            <person name="Larimer F."/>
            <person name="Land M."/>
            <person name="Hauser L."/>
            <person name="Kyrpides N."/>
            <person name="Ovchinnikova G."/>
            <person name="Hazen T.C."/>
        </authorList>
    </citation>
    <scope>NUCLEOTIDE SEQUENCE [LARGE SCALE GENOMIC DNA]</scope>
    <source>
        <strain>ATCC 27774 / DSM 6949 / MB</strain>
    </source>
</reference>
<feature type="chain" id="PRO_1000165544" description="Small ribosomal subunit protein uS11">
    <location>
        <begin position="1"/>
        <end position="129"/>
    </location>
</feature>
<sequence>MARPKKVVKKKEKKSVPVGIAHIQASFNNTIITFTDTRGNAVSWASSGQSGFKGSRKSTPFAAQVAAETAARKAQDNGMRTVGIYVQGPGSGREAAMRAISAAGMKVAFIRDVTPIPHNGCRPPKRRRV</sequence>
<proteinExistence type="inferred from homology"/>
<dbReference type="EMBL" id="CP001358">
    <property type="protein sequence ID" value="ACL48592.1"/>
    <property type="molecule type" value="Genomic_DNA"/>
</dbReference>
<dbReference type="SMR" id="B8IYL5"/>
<dbReference type="STRING" id="525146.Ddes_0684"/>
<dbReference type="KEGG" id="dds:Ddes_0684"/>
<dbReference type="eggNOG" id="COG0100">
    <property type="taxonomic scope" value="Bacteria"/>
</dbReference>
<dbReference type="HOGENOM" id="CLU_072439_5_0_7"/>
<dbReference type="GO" id="GO:1990904">
    <property type="term" value="C:ribonucleoprotein complex"/>
    <property type="evidence" value="ECO:0007669"/>
    <property type="project" value="UniProtKB-KW"/>
</dbReference>
<dbReference type="GO" id="GO:0005840">
    <property type="term" value="C:ribosome"/>
    <property type="evidence" value="ECO:0007669"/>
    <property type="project" value="UniProtKB-KW"/>
</dbReference>
<dbReference type="GO" id="GO:0019843">
    <property type="term" value="F:rRNA binding"/>
    <property type="evidence" value="ECO:0007669"/>
    <property type="project" value="UniProtKB-UniRule"/>
</dbReference>
<dbReference type="GO" id="GO:0003735">
    <property type="term" value="F:structural constituent of ribosome"/>
    <property type="evidence" value="ECO:0007669"/>
    <property type="project" value="InterPro"/>
</dbReference>
<dbReference type="GO" id="GO:0006412">
    <property type="term" value="P:translation"/>
    <property type="evidence" value="ECO:0007669"/>
    <property type="project" value="UniProtKB-UniRule"/>
</dbReference>
<dbReference type="FunFam" id="3.30.420.80:FF:000001">
    <property type="entry name" value="30S ribosomal protein S11"/>
    <property type="match status" value="1"/>
</dbReference>
<dbReference type="Gene3D" id="3.30.420.80">
    <property type="entry name" value="Ribosomal protein S11"/>
    <property type="match status" value="1"/>
</dbReference>
<dbReference type="HAMAP" id="MF_01310">
    <property type="entry name" value="Ribosomal_uS11"/>
    <property type="match status" value="1"/>
</dbReference>
<dbReference type="InterPro" id="IPR001971">
    <property type="entry name" value="Ribosomal_uS11"/>
</dbReference>
<dbReference type="InterPro" id="IPR019981">
    <property type="entry name" value="Ribosomal_uS11_bac-type"/>
</dbReference>
<dbReference type="InterPro" id="IPR018102">
    <property type="entry name" value="Ribosomal_uS11_CS"/>
</dbReference>
<dbReference type="InterPro" id="IPR036967">
    <property type="entry name" value="Ribosomal_uS11_sf"/>
</dbReference>
<dbReference type="NCBIfam" id="NF003698">
    <property type="entry name" value="PRK05309.1"/>
    <property type="match status" value="1"/>
</dbReference>
<dbReference type="NCBIfam" id="TIGR03632">
    <property type="entry name" value="uS11_bact"/>
    <property type="match status" value="1"/>
</dbReference>
<dbReference type="PANTHER" id="PTHR11759">
    <property type="entry name" value="40S RIBOSOMAL PROTEIN S14/30S RIBOSOMAL PROTEIN S11"/>
    <property type="match status" value="1"/>
</dbReference>
<dbReference type="Pfam" id="PF00411">
    <property type="entry name" value="Ribosomal_S11"/>
    <property type="match status" value="1"/>
</dbReference>
<dbReference type="PIRSF" id="PIRSF002131">
    <property type="entry name" value="Ribosomal_S11"/>
    <property type="match status" value="1"/>
</dbReference>
<dbReference type="SUPFAM" id="SSF53137">
    <property type="entry name" value="Translational machinery components"/>
    <property type="match status" value="1"/>
</dbReference>
<dbReference type="PROSITE" id="PS00054">
    <property type="entry name" value="RIBOSOMAL_S11"/>
    <property type="match status" value="1"/>
</dbReference>
<name>RS11_DESDA</name>
<protein>
    <recommendedName>
        <fullName evidence="1">Small ribosomal subunit protein uS11</fullName>
    </recommendedName>
    <alternativeName>
        <fullName evidence="2">30S ribosomal protein S11</fullName>
    </alternativeName>
</protein>
<gene>
    <name evidence="1" type="primary">rpsK</name>
    <name type="ordered locus">Ddes_0684</name>
</gene>
<evidence type="ECO:0000255" key="1">
    <source>
        <dbReference type="HAMAP-Rule" id="MF_01310"/>
    </source>
</evidence>
<evidence type="ECO:0000305" key="2"/>
<organism>
    <name type="scientific">Desulfovibrio desulfuricans (strain ATCC 27774 / DSM 6949 / MB)</name>
    <dbReference type="NCBI Taxonomy" id="525146"/>
    <lineage>
        <taxon>Bacteria</taxon>
        <taxon>Pseudomonadati</taxon>
        <taxon>Thermodesulfobacteriota</taxon>
        <taxon>Desulfovibrionia</taxon>
        <taxon>Desulfovibrionales</taxon>
        <taxon>Desulfovibrionaceae</taxon>
        <taxon>Desulfovibrio</taxon>
    </lineage>
</organism>
<keyword id="KW-0687">Ribonucleoprotein</keyword>
<keyword id="KW-0689">Ribosomal protein</keyword>
<keyword id="KW-0694">RNA-binding</keyword>
<keyword id="KW-0699">rRNA-binding</keyword>
<comment type="function">
    <text evidence="1">Located on the platform of the 30S subunit, it bridges several disparate RNA helices of the 16S rRNA. Forms part of the Shine-Dalgarno cleft in the 70S ribosome.</text>
</comment>
<comment type="subunit">
    <text evidence="1">Part of the 30S ribosomal subunit. Interacts with proteins S7 and S18. Binds to IF-3.</text>
</comment>
<comment type="similarity">
    <text evidence="1">Belongs to the universal ribosomal protein uS11 family.</text>
</comment>